<name>TX1_POEVT</name>
<organism>
    <name type="scientific">Poecilotheria vittata</name>
    <name type="common">Ghost ornamental tarantula</name>
    <name type="synonym">Poecilotheria pederseni</name>
    <dbReference type="NCBI Taxonomy" id="2053141"/>
    <lineage>
        <taxon>Eukaryota</taxon>
        <taxon>Metazoa</taxon>
        <taxon>Ecdysozoa</taxon>
        <taxon>Arthropoda</taxon>
        <taxon>Chelicerata</taxon>
        <taxon>Arachnida</taxon>
        <taxon>Araneae</taxon>
        <taxon>Mygalomorphae</taxon>
        <taxon>Theraphosidae</taxon>
        <taxon>Poecilotheria</taxon>
    </lineage>
</organism>
<protein>
    <recommendedName>
        <fullName evidence="3">Beta/delta/mu-theraphotoxin-Pv1</fullName>
    </recommendedName>
    <alternativeName>
        <fullName evidence="3">Beta/delta/mu-TRTX-Pv1</fullName>
    </alternativeName>
    <alternativeName>
        <fullName evidence="3">Poecilotheriatoxin-1</fullName>
        <shortName evidence="3">PcaTX-1</shortName>
    </alternativeName>
</protein>
<keyword id="KW-0027">Amidation</keyword>
<keyword id="KW-0903">Direct protein sequencing</keyword>
<keyword id="KW-1015">Disulfide bond</keyword>
<keyword id="KW-0872">Ion channel impairing toxin</keyword>
<keyword id="KW-0528">Neurotoxin</keyword>
<keyword id="KW-0964">Secreted</keyword>
<keyword id="KW-0800">Toxin</keyword>
<keyword id="KW-0738">Voltage-gated sodium channel impairing toxin</keyword>
<dbReference type="SMR" id="C0HLN4"/>
<dbReference type="GO" id="GO:0005615">
    <property type="term" value="C:extracellular space"/>
    <property type="evidence" value="ECO:0000314"/>
    <property type="project" value="UniProtKB"/>
</dbReference>
<dbReference type="GO" id="GO:0019871">
    <property type="term" value="F:sodium channel inhibitor activity"/>
    <property type="evidence" value="ECO:0000314"/>
    <property type="project" value="UniProtKB"/>
</dbReference>
<dbReference type="GO" id="GO:0090729">
    <property type="term" value="F:toxin activity"/>
    <property type="evidence" value="ECO:0000314"/>
    <property type="project" value="UniProtKB"/>
</dbReference>
<dbReference type="InterPro" id="IPR011696">
    <property type="entry name" value="Huwentoxin-1"/>
</dbReference>
<dbReference type="Pfam" id="PF07740">
    <property type="entry name" value="Toxin_12"/>
    <property type="match status" value="1"/>
</dbReference>
<dbReference type="SUPFAM" id="SSF57059">
    <property type="entry name" value="omega toxin-like"/>
    <property type="match status" value="1"/>
</dbReference>
<evidence type="ECO:0000250" key="1">
    <source>
        <dbReference type="UniProtKB" id="P0DM12"/>
    </source>
</evidence>
<evidence type="ECO:0000269" key="2">
    <source>
    </source>
</evidence>
<evidence type="ECO:0000303" key="3">
    <source>
    </source>
</evidence>
<evidence type="ECO:0000305" key="4"/>
<evidence type="ECO:0000305" key="5">
    <source>
    </source>
</evidence>
<reference evidence="4" key="1">
    <citation type="journal article" date="2020" name="Toxins">
        <title>Aspartic Acid Isomerization Characterized by High Definition Mass Spectrometry Significantly Alters the Bioactivity of a Novel Toxin from Poecilotheria.</title>
        <authorList>
            <person name="Johnson S.R."/>
            <person name="Rikli H.G."/>
        </authorList>
    </citation>
    <scope>PROTEIN SEQUENCE</scope>
    <scope>FUNCTION</scope>
    <scope>SUBCELLULAR LOCATION</scope>
    <scope>MASS SPECTROMETRY</scope>
    <scope>ISOMERIZATION</scope>
    <scope>AMIDATION AT PHE-36</scope>
</reference>
<proteinExistence type="evidence at protein level"/>
<comment type="function">
    <text evidence="2">Gating-modifier toxin that targets voltage-gated sodium channels. Inhibits the inactivation of Nav1.7/SCN9A.</text>
</comment>
<comment type="subcellular location">
    <subcellularLocation>
        <location evidence="2">Secreted</location>
    </subcellularLocation>
</comment>
<comment type="tissue specificity">
    <text evidence="5">Expressed by the venom gland.</text>
</comment>
<comment type="domain">
    <text evidence="1">The presence of a 'disulfide through disulfide knot' structurally defines this protein as a knottin.</text>
</comment>
<comment type="mass spectrometry" mass="4024.71" error="0.005" method="Electrospray" evidence="2"/>
<comment type="miscellaneous">
    <text evidence="2">Exists in two forms, due to cis-trans isomerization at 33-Asp-Gly-34. The cis isomer also acts by shifting activation of the Nav1.7/SCN9A channel to more depolarized voltages.</text>
</comment>
<comment type="similarity">
    <text evidence="4">Belongs to the neurotoxin 10 (Hwtx-1) family.</text>
</comment>
<accession>C0HLN4</accession>
<sequence length="36" mass="4035">AGCKYLFGSCKEDSDCCKHLGCRRKAPQYCGWDGTF</sequence>
<feature type="peptide" id="PRO_0000451742" description="Beta/delta/mu-theraphotoxin-Pv1">
    <location>
        <begin position="1"/>
        <end position="36"/>
    </location>
</feature>
<feature type="modified residue" description="Phenylalanine amide" evidence="2">
    <location>
        <position position="36"/>
    </location>
</feature>
<feature type="disulfide bond" evidence="1">
    <location>
        <begin position="3"/>
        <end position="17"/>
    </location>
</feature>
<feature type="disulfide bond" evidence="1">
    <location>
        <begin position="10"/>
        <end position="22"/>
    </location>
</feature>
<feature type="disulfide bond" evidence="1">
    <location>
        <begin position="16"/>
        <end position="30"/>
    </location>
</feature>